<evidence type="ECO:0000250" key="1"/>
<evidence type="ECO:0000255" key="2"/>
<evidence type="ECO:0000305" key="3"/>
<accession>Q5BJ91</accession>
<sequence>MSPTVQCGAVSQVVVVGGTHGNEMSGVCLAKHWLQDPSELHRKSFTAEVLLANPIAVERCVRYIDRDLNRSFSHELLSASGSESDSYEAKRAREIYQKYGPKQSSLNFVIDLHNTTSNMGTTFLLFKGDNFALHLANYLQTKCVDPSFPCHILLIDIPEGGHVHLQSMGKHSVSLELGPQPQGVARADVLTRMRALVNCSLDFLDLFNQGTEFPSFETDVHQVLYRADFPRNEDGEIEAVIHSELQDKDYLPLKPGDPIFQRLNGEDILYNGEKQIYPVFINEAAYYEKKVAFIATEKTHCLVPALKVQN</sequence>
<feature type="chain" id="PRO_0000363366" description="N-acyl-aromatic-L-amino acid amidohydrolase (carboxylate-forming)">
    <location>
        <begin position="1"/>
        <end position="310"/>
    </location>
</feature>
<feature type="binding site" evidence="2">
    <location>
        <position position="20"/>
    </location>
    <ligand>
        <name>Zn(2+)</name>
        <dbReference type="ChEBI" id="CHEBI:29105"/>
    </ligand>
</feature>
<feature type="binding site" evidence="2">
    <location>
        <position position="23"/>
    </location>
    <ligand>
        <name>Zn(2+)</name>
        <dbReference type="ChEBI" id="CHEBI:29105"/>
    </ligand>
</feature>
<feature type="binding site" evidence="2">
    <location>
        <position position="62"/>
    </location>
    <ligand>
        <name>substrate</name>
    </ligand>
</feature>
<feature type="binding site" evidence="2">
    <location>
        <begin position="69"/>
        <end position="70"/>
    </location>
    <ligand>
        <name>substrate</name>
    </ligand>
</feature>
<feature type="binding site" evidence="2">
    <location>
        <position position="113"/>
    </location>
    <ligand>
        <name>Zn(2+)</name>
        <dbReference type="ChEBI" id="CHEBI:29105"/>
    </ligand>
</feature>
<feature type="binding site" evidence="2">
    <location>
        <position position="176"/>
    </location>
    <ligand>
        <name>substrate</name>
    </ligand>
</feature>
<feature type="binding site" evidence="2">
    <location>
        <position position="286"/>
    </location>
    <ligand>
        <name>substrate</name>
    </ligand>
</feature>
<dbReference type="EC" id="3.5.1.114"/>
<dbReference type="EMBL" id="BC091576">
    <property type="protein sequence ID" value="AAH91576.1"/>
    <property type="molecule type" value="mRNA"/>
</dbReference>
<dbReference type="RefSeq" id="NP_001025627.1">
    <property type="nucleotide sequence ID" value="NM_001030456.1"/>
</dbReference>
<dbReference type="RefSeq" id="XP_012812542.1">
    <property type="nucleotide sequence ID" value="XM_012957088.3"/>
</dbReference>
<dbReference type="RefSeq" id="XP_031751875.1">
    <property type="nucleotide sequence ID" value="XM_031896015.1"/>
</dbReference>
<dbReference type="RefSeq" id="XP_031751876.1">
    <property type="nucleotide sequence ID" value="XM_031896016.1"/>
</dbReference>
<dbReference type="RefSeq" id="XP_031751877.1">
    <property type="nucleotide sequence ID" value="XM_031896017.1"/>
</dbReference>
<dbReference type="SMR" id="Q5BJ91"/>
<dbReference type="FunCoup" id="Q5BJ91">
    <property type="interactions" value="21"/>
</dbReference>
<dbReference type="STRING" id="8364.ENSXETP00000026878"/>
<dbReference type="PaxDb" id="8364-ENSXETP00000019664"/>
<dbReference type="GeneID" id="595015"/>
<dbReference type="KEGG" id="xtr:595015"/>
<dbReference type="AGR" id="Xenbase:XB-GENE-5934782"/>
<dbReference type="CTD" id="91703"/>
<dbReference type="Xenbase" id="XB-GENE-5934782">
    <property type="gene designation" value="acy3"/>
</dbReference>
<dbReference type="eggNOG" id="ENOG502RMBB">
    <property type="taxonomic scope" value="Eukaryota"/>
</dbReference>
<dbReference type="HOGENOM" id="CLU_083292_0_0_1"/>
<dbReference type="InParanoid" id="Q5BJ91"/>
<dbReference type="OMA" id="VIMHIYR"/>
<dbReference type="OrthoDB" id="8300214at2759"/>
<dbReference type="PhylomeDB" id="Q5BJ91"/>
<dbReference type="TreeFam" id="TF328708"/>
<dbReference type="Reactome" id="R-XTR-5423646">
    <property type="pathway name" value="Aflatoxin activation and detoxification"/>
</dbReference>
<dbReference type="Proteomes" id="UP000008143">
    <property type="component" value="Chromosome 2"/>
</dbReference>
<dbReference type="Bgee" id="ENSXETG00000008975">
    <property type="expression patterns" value="Expressed in skeletal muscle tissue and 5 other cell types or tissues"/>
</dbReference>
<dbReference type="GO" id="GO:0016324">
    <property type="term" value="C:apical plasma membrane"/>
    <property type="evidence" value="ECO:0007669"/>
    <property type="project" value="UniProtKB-SubCell"/>
</dbReference>
<dbReference type="GO" id="GO:0005737">
    <property type="term" value="C:cytoplasm"/>
    <property type="evidence" value="ECO:0007669"/>
    <property type="project" value="UniProtKB-SubCell"/>
</dbReference>
<dbReference type="GO" id="GO:0016811">
    <property type="term" value="F:hydrolase activity, acting on carbon-nitrogen (but not peptide) bonds, in linear amides"/>
    <property type="evidence" value="ECO:0007669"/>
    <property type="project" value="InterPro"/>
</dbReference>
<dbReference type="GO" id="GO:0016788">
    <property type="term" value="F:hydrolase activity, acting on ester bonds"/>
    <property type="evidence" value="ECO:0007669"/>
    <property type="project" value="InterPro"/>
</dbReference>
<dbReference type="GO" id="GO:0046872">
    <property type="term" value="F:metal ion binding"/>
    <property type="evidence" value="ECO:0007669"/>
    <property type="project" value="UniProtKB-KW"/>
</dbReference>
<dbReference type="CDD" id="cd06909">
    <property type="entry name" value="M14_ASPA"/>
    <property type="match status" value="1"/>
</dbReference>
<dbReference type="FunFam" id="2.20.25.160:FF:000001">
    <property type="entry name" value="Aspartoacylase"/>
    <property type="match status" value="1"/>
</dbReference>
<dbReference type="FunFam" id="3.40.630.10:FF:000025">
    <property type="entry name" value="aspartoacylase"/>
    <property type="match status" value="1"/>
</dbReference>
<dbReference type="Gene3D" id="2.20.25.160">
    <property type="match status" value="1"/>
</dbReference>
<dbReference type="Gene3D" id="3.40.630.10">
    <property type="entry name" value="Zn peptidases"/>
    <property type="match status" value="1"/>
</dbReference>
<dbReference type="HAMAP" id="MF_00704">
    <property type="entry name" value="Aspartoacylase"/>
    <property type="match status" value="1"/>
</dbReference>
<dbReference type="InterPro" id="IPR050178">
    <property type="entry name" value="AspA/AstE_fam"/>
</dbReference>
<dbReference type="InterPro" id="IPR016708">
    <property type="entry name" value="Aspartoacylase"/>
</dbReference>
<dbReference type="InterPro" id="IPR055438">
    <property type="entry name" value="AstE_AspA_cat"/>
</dbReference>
<dbReference type="InterPro" id="IPR007036">
    <property type="entry name" value="Aste_AspA_hybrid_dom"/>
</dbReference>
<dbReference type="NCBIfam" id="NF002601">
    <property type="entry name" value="PRK02259.1"/>
    <property type="match status" value="1"/>
</dbReference>
<dbReference type="PANTHER" id="PTHR15162">
    <property type="entry name" value="ASPARTOACYLASE"/>
    <property type="match status" value="1"/>
</dbReference>
<dbReference type="PANTHER" id="PTHR15162:SF5">
    <property type="entry name" value="N-ACYL-AROMATIC-L-AMINO ACID AMIDOHYDROLASE (CARBOXYLATE-FORMING)"/>
    <property type="match status" value="1"/>
</dbReference>
<dbReference type="Pfam" id="PF24827">
    <property type="entry name" value="AstE_AspA_cat"/>
    <property type="match status" value="1"/>
</dbReference>
<dbReference type="Pfam" id="PF04952">
    <property type="entry name" value="AstE_AspA_hybrid"/>
    <property type="match status" value="1"/>
</dbReference>
<dbReference type="PIRSF" id="PIRSF018001">
    <property type="entry name" value="Aspartoacylase"/>
    <property type="match status" value="1"/>
</dbReference>
<dbReference type="SUPFAM" id="SSF53187">
    <property type="entry name" value="Zn-dependent exopeptidases"/>
    <property type="match status" value="1"/>
</dbReference>
<gene>
    <name type="primary">acy3</name>
</gene>
<name>ACY3_XENTR</name>
<protein>
    <recommendedName>
        <fullName>N-acyl-aromatic-L-amino acid amidohydrolase (carboxylate-forming)</fullName>
        <ecNumber>3.5.1.114</ecNumber>
    </recommendedName>
    <alternativeName>
        <fullName>Aminoacylase-3</fullName>
        <shortName>ACY-3</shortName>
    </alternativeName>
    <alternativeName>
        <fullName>Aspartoacylase-2</fullName>
    </alternativeName>
</protein>
<comment type="function">
    <text evidence="1">Plays an important role in deacetylating mercapturic acids in kidney proximal tubules.</text>
</comment>
<comment type="catalytic activity">
    <reaction>
        <text>an N-acyl-aromatic L-alpha-amino acid + H2O = an aromatic L-alpha-amino acid + a carboxylate</text>
        <dbReference type="Rhea" id="RHEA:54184"/>
        <dbReference type="ChEBI" id="CHEBI:15377"/>
        <dbReference type="ChEBI" id="CHEBI:29067"/>
        <dbReference type="ChEBI" id="CHEBI:84824"/>
        <dbReference type="ChEBI" id="CHEBI:138093"/>
        <dbReference type="EC" id="3.5.1.114"/>
    </reaction>
</comment>
<comment type="catalytic activity">
    <reaction>
        <text>an N-acetyl-L-cysteine-S-conjugate + H2O = an S-substituted L-cysteine + acetate</text>
        <dbReference type="Rhea" id="RHEA:36855"/>
        <dbReference type="ChEBI" id="CHEBI:15377"/>
        <dbReference type="ChEBI" id="CHEBI:30089"/>
        <dbReference type="ChEBI" id="CHEBI:58717"/>
        <dbReference type="ChEBI" id="CHEBI:58718"/>
        <dbReference type="EC" id="3.5.1.114"/>
    </reaction>
</comment>
<comment type="cofactor">
    <cofactor evidence="3">
        <name>Zn(2+)</name>
        <dbReference type="ChEBI" id="CHEBI:29105"/>
    </cofactor>
    <text evidence="3">Binds 1 zinc ion per subunit.</text>
</comment>
<comment type="subunit">
    <text evidence="1">Homotetramer.</text>
</comment>
<comment type="subcellular location">
    <subcellularLocation>
        <location>Apical cell membrane</location>
        <topology>Peripheral membrane protein</topology>
    </subcellularLocation>
    <subcellularLocation>
        <location evidence="1">Cytoplasm</location>
    </subcellularLocation>
</comment>
<comment type="similarity">
    <text evidence="3">Belongs to the AspA/AstE family. Aspartoacylase subfamily.</text>
</comment>
<organism>
    <name type="scientific">Xenopus tropicalis</name>
    <name type="common">Western clawed frog</name>
    <name type="synonym">Silurana tropicalis</name>
    <dbReference type="NCBI Taxonomy" id="8364"/>
    <lineage>
        <taxon>Eukaryota</taxon>
        <taxon>Metazoa</taxon>
        <taxon>Chordata</taxon>
        <taxon>Craniata</taxon>
        <taxon>Vertebrata</taxon>
        <taxon>Euteleostomi</taxon>
        <taxon>Amphibia</taxon>
        <taxon>Batrachia</taxon>
        <taxon>Anura</taxon>
        <taxon>Pipoidea</taxon>
        <taxon>Pipidae</taxon>
        <taxon>Xenopodinae</taxon>
        <taxon>Xenopus</taxon>
        <taxon>Silurana</taxon>
    </lineage>
</organism>
<reference key="1">
    <citation type="submission" date="2005-03" db="EMBL/GenBank/DDBJ databases">
        <authorList>
            <consortium name="NIH - Xenopus Gene Collection (XGC) project"/>
        </authorList>
    </citation>
    <scope>NUCLEOTIDE SEQUENCE [LARGE SCALE MRNA]</scope>
    <source>
        <tissue>Embryo</tissue>
    </source>
</reference>
<proteinExistence type="evidence at transcript level"/>
<keyword id="KW-1003">Cell membrane</keyword>
<keyword id="KW-0963">Cytoplasm</keyword>
<keyword id="KW-0378">Hydrolase</keyword>
<keyword id="KW-0472">Membrane</keyword>
<keyword id="KW-0479">Metal-binding</keyword>
<keyword id="KW-1185">Reference proteome</keyword>
<keyword id="KW-0862">Zinc</keyword>